<protein>
    <recommendedName>
        <fullName evidence="1">Large ribosomal subunit protein bL32</fullName>
    </recommendedName>
    <alternativeName>
        <fullName evidence="2">50S ribosomal protein L32</fullName>
    </alternativeName>
</protein>
<comment type="similarity">
    <text evidence="1">Belongs to the bacterial ribosomal protein bL32 family.</text>
</comment>
<organism>
    <name type="scientific">Pseudothermotoga lettingae (strain ATCC BAA-301 / DSM 14385 / NBRC 107922 / TMO)</name>
    <name type="common">Thermotoga lettingae</name>
    <dbReference type="NCBI Taxonomy" id="416591"/>
    <lineage>
        <taxon>Bacteria</taxon>
        <taxon>Thermotogati</taxon>
        <taxon>Thermotogota</taxon>
        <taxon>Thermotogae</taxon>
        <taxon>Thermotogales</taxon>
        <taxon>Thermotogaceae</taxon>
        <taxon>Pseudothermotoga</taxon>
    </lineage>
</organism>
<sequence length="60" mass="6878">MAVPKQKRSRSRTHTKRAKIYRTVSVPISKCPNCGQPKLPHRVCLHCGYYNGKQILEIAE</sequence>
<name>RL32_PSELT</name>
<proteinExistence type="inferred from homology"/>
<gene>
    <name evidence="1" type="primary">rpmF</name>
    <name type="ordered locus">Tlet_1895</name>
</gene>
<reference key="1">
    <citation type="submission" date="2007-08" db="EMBL/GenBank/DDBJ databases">
        <title>Complete sequence of Thermotoga lettingae TMO.</title>
        <authorList>
            <consortium name="US DOE Joint Genome Institute"/>
            <person name="Copeland A."/>
            <person name="Lucas S."/>
            <person name="Lapidus A."/>
            <person name="Barry K."/>
            <person name="Glavina del Rio T."/>
            <person name="Dalin E."/>
            <person name="Tice H."/>
            <person name="Pitluck S."/>
            <person name="Foster B."/>
            <person name="Bruce D."/>
            <person name="Schmutz J."/>
            <person name="Larimer F."/>
            <person name="Land M."/>
            <person name="Hauser L."/>
            <person name="Kyrpides N."/>
            <person name="Mikhailova N."/>
            <person name="Nelson K."/>
            <person name="Gogarten J.P."/>
            <person name="Noll K."/>
            <person name="Richardson P."/>
        </authorList>
    </citation>
    <scope>NUCLEOTIDE SEQUENCE [LARGE SCALE GENOMIC DNA]</scope>
    <source>
        <strain>ATCC BAA-301 / DSM 14385 / NBRC 107922 / TMO</strain>
    </source>
</reference>
<accession>A8F8G5</accession>
<evidence type="ECO:0000255" key="1">
    <source>
        <dbReference type="HAMAP-Rule" id="MF_00340"/>
    </source>
</evidence>
<evidence type="ECO:0000305" key="2"/>
<feature type="chain" id="PRO_1000059824" description="Large ribosomal subunit protein bL32">
    <location>
        <begin position="1"/>
        <end position="60"/>
    </location>
</feature>
<dbReference type="EMBL" id="CP000812">
    <property type="protein sequence ID" value="ABV34449.1"/>
    <property type="molecule type" value="Genomic_DNA"/>
</dbReference>
<dbReference type="RefSeq" id="WP_012003925.1">
    <property type="nucleotide sequence ID" value="NZ_BSDV01000001.1"/>
</dbReference>
<dbReference type="SMR" id="A8F8G5"/>
<dbReference type="STRING" id="416591.Tlet_1895"/>
<dbReference type="KEGG" id="tle:Tlet_1895"/>
<dbReference type="eggNOG" id="COG0333">
    <property type="taxonomic scope" value="Bacteria"/>
</dbReference>
<dbReference type="HOGENOM" id="CLU_129084_1_3_0"/>
<dbReference type="OrthoDB" id="9812874at2"/>
<dbReference type="Proteomes" id="UP000002016">
    <property type="component" value="Chromosome"/>
</dbReference>
<dbReference type="GO" id="GO:0015934">
    <property type="term" value="C:large ribosomal subunit"/>
    <property type="evidence" value="ECO:0007669"/>
    <property type="project" value="InterPro"/>
</dbReference>
<dbReference type="GO" id="GO:0003735">
    <property type="term" value="F:structural constituent of ribosome"/>
    <property type="evidence" value="ECO:0007669"/>
    <property type="project" value="InterPro"/>
</dbReference>
<dbReference type="GO" id="GO:0006412">
    <property type="term" value="P:translation"/>
    <property type="evidence" value="ECO:0007669"/>
    <property type="project" value="UniProtKB-UniRule"/>
</dbReference>
<dbReference type="HAMAP" id="MF_00340">
    <property type="entry name" value="Ribosomal_bL32"/>
    <property type="match status" value="1"/>
</dbReference>
<dbReference type="InterPro" id="IPR002677">
    <property type="entry name" value="Ribosomal_bL32"/>
</dbReference>
<dbReference type="InterPro" id="IPR044957">
    <property type="entry name" value="Ribosomal_bL32_bact"/>
</dbReference>
<dbReference type="InterPro" id="IPR011332">
    <property type="entry name" value="Ribosomal_zn-bd"/>
</dbReference>
<dbReference type="NCBIfam" id="TIGR01031">
    <property type="entry name" value="rpmF_bact"/>
    <property type="match status" value="1"/>
</dbReference>
<dbReference type="PANTHER" id="PTHR35534">
    <property type="entry name" value="50S RIBOSOMAL PROTEIN L32"/>
    <property type="match status" value="1"/>
</dbReference>
<dbReference type="PANTHER" id="PTHR35534:SF1">
    <property type="entry name" value="LARGE RIBOSOMAL SUBUNIT PROTEIN BL32"/>
    <property type="match status" value="1"/>
</dbReference>
<dbReference type="Pfam" id="PF01783">
    <property type="entry name" value="Ribosomal_L32p"/>
    <property type="match status" value="1"/>
</dbReference>
<dbReference type="SUPFAM" id="SSF57829">
    <property type="entry name" value="Zn-binding ribosomal proteins"/>
    <property type="match status" value="1"/>
</dbReference>
<keyword id="KW-1185">Reference proteome</keyword>
<keyword id="KW-0687">Ribonucleoprotein</keyword>
<keyword id="KW-0689">Ribosomal protein</keyword>